<evidence type="ECO:0000255" key="1">
    <source>
        <dbReference type="HAMAP-Rule" id="MF_00033"/>
    </source>
</evidence>
<proteinExistence type="inferred from homology"/>
<reference key="1">
    <citation type="journal article" date="2004" name="Nat. Biotechnol.">
        <title>The genome sequence of the anaerobic, sulfate-reducing bacterium Desulfovibrio vulgaris Hildenborough.</title>
        <authorList>
            <person name="Heidelberg J.F."/>
            <person name="Seshadri R."/>
            <person name="Haveman S.A."/>
            <person name="Hemme C.L."/>
            <person name="Paulsen I.T."/>
            <person name="Kolonay J.F."/>
            <person name="Eisen J.A."/>
            <person name="Ward N.L."/>
            <person name="Methe B.A."/>
            <person name="Brinkac L.M."/>
            <person name="Daugherty S.C."/>
            <person name="DeBoy R.T."/>
            <person name="Dodson R.J."/>
            <person name="Durkin A.S."/>
            <person name="Madupu R."/>
            <person name="Nelson W.C."/>
            <person name="Sullivan S.A."/>
            <person name="Fouts D.E."/>
            <person name="Haft D.H."/>
            <person name="Selengut J."/>
            <person name="Peterson J.D."/>
            <person name="Davidsen T.M."/>
            <person name="Zafar N."/>
            <person name="Zhou L."/>
            <person name="Radune D."/>
            <person name="Dimitrov G."/>
            <person name="Hance M."/>
            <person name="Tran K."/>
            <person name="Khouri H.M."/>
            <person name="Gill J."/>
            <person name="Utterback T.R."/>
            <person name="Feldblyum T.V."/>
            <person name="Wall J.D."/>
            <person name="Voordouw G."/>
            <person name="Fraser C.M."/>
        </authorList>
    </citation>
    <scope>NUCLEOTIDE SEQUENCE [LARGE SCALE GENOMIC DNA]</scope>
    <source>
        <strain>ATCC 29579 / DSM 644 / CCUG 34227 / NCIMB 8303 / VKM B-1760 / Hildenborough</strain>
    </source>
</reference>
<name>MURG_NITV2</name>
<organism>
    <name type="scientific">Nitratidesulfovibrio vulgaris (strain ATCC 29579 / DSM 644 / CCUG 34227 / NCIMB 8303 / VKM B-1760 / Hildenborough)</name>
    <name type="common">Desulfovibrio vulgaris</name>
    <dbReference type="NCBI Taxonomy" id="882"/>
    <lineage>
        <taxon>Bacteria</taxon>
        <taxon>Pseudomonadati</taxon>
        <taxon>Thermodesulfobacteriota</taxon>
        <taxon>Desulfovibrionia</taxon>
        <taxon>Desulfovibrionales</taxon>
        <taxon>Desulfovibrionaceae</taxon>
        <taxon>Nitratidesulfovibrio</taxon>
    </lineage>
</organism>
<comment type="function">
    <text evidence="1">Cell wall formation. Catalyzes the transfer of a GlcNAc subunit on undecaprenyl-pyrophosphoryl-MurNAc-pentapeptide (lipid intermediate I) to form undecaprenyl-pyrophosphoryl-MurNAc-(pentapeptide)GlcNAc (lipid intermediate II).</text>
</comment>
<comment type="catalytic activity">
    <reaction evidence="1">
        <text>di-trans,octa-cis-undecaprenyl diphospho-N-acetyl-alpha-D-muramoyl-L-alanyl-D-glutamyl-meso-2,6-diaminopimeloyl-D-alanyl-D-alanine + UDP-N-acetyl-alpha-D-glucosamine = di-trans,octa-cis-undecaprenyl diphospho-[N-acetyl-alpha-D-glucosaminyl-(1-&gt;4)]-N-acetyl-alpha-D-muramoyl-L-alanyl-D-glutamyl-meso-2,6-diaminopimeloyl-D-alanyl-D-alanine + UDP + H(+)</text>
        <dbReference type="Rhea" id="RHEA:31227"/>
        <dbReference type="ChEBI" id="CHEBI:15378"/>
        <dbReference type="ChEBI" id="CHEBI:57705"/>
        <dbReference type="ChEBI" id="CHEBI:58223"/>
        <dbReference type="ChEBI" id="CHEBI:61387"/>
        <dbReference type="ChEBI" id="CHEBI:61388"/>
        <dbReference type="EC" id="2.4.1.227"/>
    </reaction>
</comment>
<comment type="pathway">
    <text evidence="1">Cell wall biogenesis; peptidoglycan biosynthesis.</text>
</comment>
<comment type="subcellular location">
    <subcellularLocation>
        <location evidence="1">Cell inner membrane</location>
        <topology evidence="1">Peripheral membrane protein</topology>
        <orientation evidence="1">Cytoplasmic side</orientation>
    </subcellularLocation>
</comment>
<comment type="similarity">
    <text evidence="1">Belongs to the glycosyltransferase 28 family. MurG subfamily.</text>
</comment>
<feature type="chain" id="PRO_0000225052" description="UDP-N-acetylglucosamine--N-acetylmuramyl-(pentapeptide) pyrophosphoryl-undecaprenol N-acetylglucosamine transferase">
    <location>
        <begin position="1"/>
        <end position="365"/>
    </location>
</feature>
<feature type="binding site" evidence="1">
    <location>
        <begin position="11"/>
        <end position="13"/>
    </location>
    <ligand>
        <name>UDP-N-acetyl-alpha-D-glucosamine</name>
        <dbReference type="ChEBI" id="CHEBI:57705"/>
    </ligand>
</feature>
<feature type="binding site" evidence="1">
    <location>
        <position position="124"/>
    </location>
    <ligand>
        <name>UDP-N-acetyl-alpha-D-glucosamine</name>
        <dbReference type="ChEBI" id="CHEBI:57705"/>
    </ligand>
</feature>
<feature type="binding site" evidence="1">
    <location>
        <position position="165"/>
    </location>
    <ligand>
        <name>UDP-N-acetyl-alpha-D-glucosamine</name>
        <dbReference type="ChEBI" id="CHEBI:57705"/>
    </ligand>
</feature>
<feature type="binding site" evidence="1">
    <location>
        <position position="192"/>
    </location>
    <ligand>
        <name>UDP-N-acetyl-alpha-D-glucosamine</name>
        <dbReference type="ChEBI" id="CHEBI:57705"/>
    </ligand>
</feature>
<feature type="binding site" evidence="1">
    <location>
        <position position="246"/>
    </location>
    <ligand>
        <name>UDP-N-acetyl-alpha-D-glucosamine</name>
        <dbReference type="ChEBI" id="CHEBI:57705"/>
    </ligand>
</feature>
<feature type="binding site" evidence="1">
    <location>
        <position position="291"/>
    </location>
    <ligand>
        <name>UDP-N-acetyl-alpha-D-glucosamine</name>
        <dbReference type="ChEBI" id="CHEBI:57705"/>
    </ligand>
</feature>
<sequence length="365" mass="38297">MRRVILTTGGTGGHIFPALAVAEEIRARYPECSVLFMGGLYGPEADLAARAGLDFVGLPVRGVLGRGVRAIGAAFGMAAGIARAYAVMGRFDPDIVLGFGGYAAFAGVLAARLRGRPAAIHEQNSVPGLTNRVLSRVVPRVFLSLPDTLGAFPPQKTCLAGNPVRASIVACGAERSDPRPDHVRRLLVMGGSLGARAINDAVVSSLPALAEAGVEVWHQTGAADWERIRKAYAETGHGEGRVEAFIDDVASAYAWADLVLCRAGATSVAELAVAGKPAVLVPYPFATHDHQTHNARWLVSRGAAVLLEQKDISMTDVPALLVGLLSDRARLNRMAVSARAQGRPDAAAAVVDGLVELLKTTPRAR</sequence>
<protein>
    <recommendedName>
        <fullName evidence="1">UDP-N-acetylglucosamine--N-acetylmuramyl-(pentapeptide) pyrophosphoryl-undecaprenol N-acetylglucosamine transferase</fullName>
        <ecNumber evidence="1">2.4.1.227</ecNumber>
    </recommendedName>
    <alternativeName>
        <fullName evidence="1">Undecaprenyl-PP-MurNAc-pentapeptide-UDPGlcNAc GlcNAc transferase</fullName>
    </alternativeName>
</protein>
<gene>
    <name evidence="1" type="primary">murG</name>
    <name type="ordered locus">DVU_2504</name>
</gene>
<accession>Q728U8</accession>
<dbReference type="EC" id="2.4.1.227" evidence="1"/>
<dbReference type="EMBL" id="AE017285">
    <property type="protein sequence ID" value="AAS96976.1"/>
    <property type="molecule type" value="Genomic_DNA"/>
</dbReference>
<dbReference type="RefSeq" id="WP_010939774.1">
    <property type="nucleotide sequence ID" value="NC_002937.3"/>
</dbReference>
<dbReference type="RefSeq" id="YP_011716.1">
    <property type="nucleotide sequence ID" value="NC_002937.3"/>
</dbReference>
<dbReference type="SMR" id="Q728U8"/>
<dbReference type="STRING" id="882.DVU_2504"/>
<dbReference type="CAZy" id="GT28">
    <property type="family name" value="Glycosyltransferase Family 28"/>
</dbReference>
<dbReference type="PaxDb" id="882-DVU_2504"/>
<dbReference type="EnsemblBacteria" id="AAS96976">
    <property type="protein sequence ID" value="AAS96976"/>
    <property type="gene ID" value="DVU_2504"/>
</dbReference>
<dbReference type="KEGG" id="dvu:DVU_2504"/>
<dbReference type="PATRIC" id="fig|882.5.peg.2264"/>
<dbReference type="eggNOG" id="COG0707">
    <property type="taxonomic scope" value="Bacteria"/>
</dbReference>
<dbReference type="HOGENOM" id="CLU_037404_2_0_7"/>
<dbReference type="OrthoDB" id="9808936at2"/>
<dbReference type="PhylomeDB" id="Q728U8"/>
<dbReference type="UniPathway" id="UPA00219"/>
<dbReference type="Proteomes" id="UP000002194">
    <property type="component" value="Chromosome"/>
</dbReference>
<dbReference type="GO" id="GO:0005886">
    <property type="term" value="C:plasma membrane"/>
    <property type="evidence" value="ECO:0007669"/>
    <property type="project" value="UniProtKB-SubCell"/>
</dbReference>
<dbReference type="GO" id="GO:0051991">
    <property type="term" value="F:UDP-N-acetyl-D-glucosamine:N-acetylmuramoyl-L-alanyl-D-glutamyl-meso-2,6-diaminopimelyl-D-alanyl-D-alanine-diphosphoundecaprenol 4-beta-N-acetylglucosaminlytransferase activity"/>
    <property type="evidence" value="ECO:0007669"/>
    <property type="project" value="RHEA"/>
</dbReference>
<dbReference type="GO" id="GO:0050511">
    <property type="term" value="F:undecaprenyldiphospho-muramoylpentapeptide beta-N-acetylglucosaminyltransferase activity"/>
    <property type="evidence" value="ECO:0007669"/>
    <property type="project" value="UniProtKB-UniRule"/>
</dbReference>
<dbReference type="GO" id="GO:0005975">
    <property type="term" value="P:carbohydrate metabolic process"/>
    <property type="evidence" value="ECO:0007669"/>
    <property type="project" value="InterPro"/>
</dbReference>
<dbReference type="GO" id="GO:0051301">
    <property type="term" value="P:cell division"/>
    <property type="evidence" value="ECO:0007669"/>
    <property type="project" value="UniProtKB-KW"/>
</dbReference>
<dbReference type="GO" id="GO:0071555">
    <property type="term" value="P:cell wall organization"/>
    <property type="evidence" value="ECO:0007669"/>
    <property type="project" value="UniProtKB-KW"/>
</dbReference>
<dbReference type="GO" id="GO:0030259">
    <property type="term" value="P:lipid glycosylation"/>
    <property type="evidence" value="ECO:0007669"/>
    <property type="project" value="UniProtKB-UniRule"/>
</dbReference>
<dbReference type="GO" id="GO:0009252">
    <property type="term" value="P:peptidoglycan biosynthetic process"/>
    <property type="evidence" value="ECO:0007669"/>
    <property type="project" value="UniProtKB-UniRule"/>
</dbReference>
<dbReference type="GO" id="GO:0008360">
    <property type="term" value="P:regulation of cell shape"/>
    <property type="evidence" value="ECO:0007669"/>
    <property type="project" value="UniProtKB-KW"/>
</dbReference>
<dbReference type="CDD" id="cd03785">
    <property type="entry name" value="GT28_MurG"/>
    <property type="match status" value="1"/>
</dbReference>
<dbReference type="Gene3D" id="3.40.50.2000">
    <property type="entry name" value="Glycogen Phosphorylase B"/>
    <property type="match status" value="2"/>
</dbReference>
<dbReference type="HAMAP" id="MF_00033">
    <property type="entry name" value="MurG"/>
    <property type="match status" value="1"/>
</dbReference>
<dbReference type="InterPro" id="IPR006009">
    <property type="entry name" value="GlcNAc_MurG"/>
</dbReference>
<dbReference type="InterPro" id="IPR007235">
    <property type="entry name" value="Glyco_trans_28_C"/>
</dbReference>
<dbReference type="InterPro" id="IPR004276">
    <property type="entry name" value="GlycoTrans_28_N"/>
</dbReference>
<dbReference type="NCBIfam" id="TIGR01133">
    <property type="entry name" value="murG"/>
    <property type="match status" value="1"/>
</dbReference>
<dbReference type="PANTHER" id="PTHR21015:SF22">
    <property type="entry name" value="GLYCOSYLTRANSFERASE"/>
    <property type="match status" value="1"/>
</dbReference>
<dbReference type="PANTHER" id="PTHR21015">
    <property type="entry name" value="UDP-N-ACETYLGLUCOSAMINE--N-ACETYLMURAMYL-(PENTAPEPTIDE) PYROPHOSPHORYL-UNDECAPRENOL N-ACETYLGLUCOSAMINE TRANSFERASE 1"/>
    <property type="match status" value="1"/>
</dbReference>
<dbReference type="Pfam" id="PF04101">
    <property type="entry name" value="Glyco_tran_28_C"/>
    <property type="match status" value="1"/>
</dbReference>
<dbReference type="Pfam" id="PF03033">
    <property type="entry name" value="Glyco_transf_28"/>
    <property type="match status" value="1"/>
</dbReference>
<dbReference type="SUPFAM" id="SSF53756">
    <property type="entry name" value="UDP-Glycosyltransferase/glycogen phosphorylase"/>
    <property type="match status" value="1"/>
</dbReference>
<keyword id="KW-0131">Cell cycle</keyword>
<keyword id="KW-0132">Cell division</keyword>
<keyword id="KW-0997">Cell inner membrane</keyword>
<keyword id="KW-1003">Cell membrane</keyword>
<keyword id="KW-0133">Cell shape</keyword>
<keyword id="KW-0961">Cell wall biogenesis/degradation</keyword>
<keyword id="KW-0328">Glycosyltransferase</keyword>
<keyword id="KW-0472">Membrane</keyword>
<keyword id="KW-0573">Peptidoglycan synthesis</keyword>
<keyword id="KW-1185">Reference proteome</keyword>
<keyword id="KW-0808">Transferase</keyword>